<feature type="chain" id="PRO_1000132499" description="Probable glycine dehydrogenase (decarboxylating) subunit 2">
    <location>
        <begin position="1"/>
        <end position="491"/>
    </location>
</feature>
<feature type="modified residue" description="N6-(pyridoxal phosphate)lysine" evidence="1">
    <location>
        <position position="264"/>
    </location>
</feature>
<accession>B6J2H6</accession>
<reference key="1">
    <citation type="journal article" date="2009" name="Infect. Immun.">
        <title>Comparative genomics reveal extensive transposon-mediated genomic plasticity and diversity among potential effector proteins within the genus Coxiella.</title>
        <authorList>
            <person name="Beare P.A."/>
            <person name="Unsworth N."/>
            <person name="Andoh M."/>
            <person name="Voth D.E."/>
            <person name="Omsland A."/>
            <person name="Gilk S.D."/>
            <person name="Williams K.P."/>
            <person name="Sobral B.W."/>
            <person name="Kupko J.J. III"/>
            <person name="Porcella S.F."/>
            <person name="Samuel J.E."/>
            <person name="Heinzen R.A."/>
        </authorList>
    </citation>
    <scope>NUCLEOTIDE SEQUENCE [LARGE SCALE GENOMIC DNA]</scope>
    <source>
        <strain>CbuG_Q212</strain>
    </source>
</reference>
<keyword id="KW-0560">Oxidoreductase</keyword>
<keyword id="KW-0663">Pyridoxal phosphate</keyword>
<comment type="function">
    <text evidence="1">The glycine cleavage system catalyzes the degradation of glycine. The P protein binds the alpha-amino group of glycine through its pyridoxal phosphate cofactor; CO(2) is released and the remaining methylamine moiety is then transferred to the lipoamide cofactor of the H protein.</text>
</comment>
<comment type="catalytic activity">
    <reaction evidence="1">
        <text>N(6)-[(R)-lipoyl]-L-lysyl-[glycine-cleavage complex H protein] + glycine + H(+) = N(6)-[(R)-S(8)-aminomethyldihydrolipoyl]-L-lysyl-[glycine-cleavage complex H protein] + CO2</text>
        <dbReference type="Rhea" id="RHEA:24304"/>
        <dbReference type="Rhea" id="RHEA-COMP:10494"/>
        <dbReference type="Rhea" id="RHEA-COMP:10495"/>
        <dbReference type="ChEBI" id="CHEBI:15378"/>
        <dbReference type="ChEBI" id="CHEBI:16526"/>
        <dbReference type="ChEBI" id="CHEBI:57305"/>
        <dbReference type="ChEBI" id="CHEBI:83099"/>
        <dbReference type="ChEBI" id="CHEBI:83143"/>
        <dbReference type="EC" id="1.4.4.2"/>
    </reaction>
</comment>
<comment type="cofactor">
    <cofactor evidence="1">
        <name>pyridoxal 5'-phosphate</name>
        <dbReference type="ChEBI" id="CHEBI:597326"/>
    </cofactor>
</comment>
<comment type="subunit">
    <text evidence="1">The glycine cleavage system is composed of four proteins: P, T, L and H. In this organism, the P 'protein' is a heterodimer of two subunits.</text>
</comment>
<comment type="similarity">
    <text evidence="1">Belongs to the GcvP family. C-terminal subunit subfamily.</text>
</comment>
<gene>
    <name evidence="1" type="primary">gcvPB</name>
    <name type="ordered locus">CbuG_0095</name>
</gene>
<dbReference type="EC" id="1.4.4.2" evidence="1"/>
<dbReference type="EMBL" id="CP001019">
    <property type="protein sequence ID" value="ACJ17550.1"/>
    <property type="molecule type" value="Genomic_DNA"/>
</dbReference>
<dbReference type="RefSeq" id="WP_012569590.1">
    <property type="nucleotide sequence ID" value="NC_011527.1"/>
</dbReference>
<dbReference type="SMR" id="B6J2H6"/>
<dbReference type="KEGG" id="cbg:CbuG_0095"/>
<dbReference type="HOGENOM" id="CLU_004620_5_0_6"/>
<dbReference type="GO" id="GO:0005829">
    <property type="term" value="C:cytosol"/>
    <property type="evidence" value="ECO:0007669"/>
    <property type="project" value="TreeGrafter"/>
</dbReference>
<dbReference type="GO" id="GO:0005960">
    <property type="term" value="C:glycine cleavage complex"/>
    <property type="evidence" value="ECO:0007669"/>
    <property type="project" value="TreeGrafter"/>
</dbReference>
<dbReference type="GO" id="GO:0016594">
    <property type="term" value="F:glycine binding"/>
    <property type="evidence" value="ECO:0007669"/>
    <property type="project" value="TreeGrafter"/>
</dbReference>
<dbReference type="GO" id="GO:0004375">
    <property type="term" value="F:glycine dehydrogenase (decarboxylating) activity"/>
    <property type="evidence" value="ECO:0007669"/>
    <property type="project" value="UniProtKB-EC"/>
</dbReference>
<dbReference type="GO" id="GO:0030170">
    <property type="term" value="F:pyridoxal phosphate binding"/>
    <property type="evidence" value="ECO:0007669"/>
    <property type="project" value="TreeGrafter"/>
</dbReference>
<dbReference type="GO" id="GO:0019464">
    <property type="term" value="P:glycine decarboxylation via glycine cleavage system"/>
    <property type="evidence" value="ECO:0007669"/>
    <property type="project" value="UniProtKB-UniRule"/>
</dbReference>
<dbReference type="CDD" id="cd00613">
    <property type="entry name" value="GDC-P"/>
    <property type="match status" value="1"/>
</dbReference>
<dbReference type="FunFam" id="3.40.640.10:FF:000034">
    <property type="entry name" value="Probable glycine dehydrogenase (decarboxylating) subunit 2"/>
    <property type="match status" value="1"/>
</dbReference>
<dbReference type="FunFam" id="3.90.1150.10:FF:000014">
    <property type="entry name" value="Probable glycine dehydrogenase (decarboxylating) subunit 2"/>
    <property type="match status" value="1"/>
</dbReference>
<dbReference type="Gene3D" id="6.20.440.10">
    <property type="match status" value="1"/>
</dbReference>
<dbReference type="Gene3D" id="3.90.1150.10">
    <property type="entry name" value="Aspartate Aminotransferase, domain 1"/>
    <property type="match status" value="1"/>
</dbReference>
<dbReference type="Gene3D" id="3.40.640.10">
    <property type="entry name" value="Type I PLP-dependent aspartate aminotransferase-like (Major domain)"/>
    <property type="match status" value="1"/>
</dbReference>
<dbReference type="HAMAP" id="MF_00713">
    <property type="entry name" value="GcvPB"/>
    <property type="match status" value="1"/>
</dbReference>
<dbReference type="InterPro" id="IPR023012">
    <property type="entry name" value="GcvPB"/>
</dbReference>
<dbReference type="InterPro" id="IPR049316">
    <property type="entry name" value="GDC-P_C"/>
</dbReference>
<dbReference type="InterPro" id="IPR049315">
    <property type="entry name" value="GDC-P_N"/>
</dbReference>
<dbReference type="InterPro" id="IPR020581">
    <property type="entry name" value="GDC_P"/>
</dbReference>
<dbReference type="InterPro" id="IPR015424">
    <property type="entry name" value="PyrdxlP-dep_Trfase"/>
</dbReference>
<dbReference type="InterPro" id="IPR015421">
    <property type="entry name" value="PyrdxlP-dep_Trfase_major"/>
</dbReference>
<dbReference type="InterPro" id="IPR015422">
    <property type="entry name" value="PyrdxlP-dep_Trfase_small"/>
</dbReference>
<dbReference type="NCBIfam" id="NF003346">
    <property type="entry name" value="PRK04366.1"/>
    <property type="match status" value="1"/>
</dbReference>
<dbReference type="PANTHER" id="PTHR11773:SF1">
    <property type="entry name" value="GLYCINE DEHYDROGENASE (DECARBOXYLATING), MITOCHONDRIAL"/>
    <property type="match status" value="1"/>
</dbReference>
<dbReference type="PANTHER" id="PTHR11773">
    <property type="entry name" value="GLYCINE DEHYDROGENASE, DECARBOXYLATING"/>
    <property type="match status" value="1"/>
</dbReference>
<dbReference type="Pfam" id="PF21478">
    <property type="entry name" value="GcvP2_C"/>
    <property type="match status" value="1"/>
</dbReference>
<dbReference type="Pfam" id="PF02347">
    <property type="entry name" value="GDC-P"/>
    <property type="match status" value="1"/>
</dbReference>
<dbReference type="SUPFAM" id="SSF53383">
    <property type="entry name" value="PLP-dependent transferases"/>
    <property type="match status" value="1"/>
</dbReference>
<name>GCSPB_COXB2</name>
<evidence type="ECO:0000255" key="1">
    <source>
        <dbReference type="HAMAP-Rule" id="MF_00713"/>
    </source>
</evidence>
<organism>
    <name type="scientific">Coxiella burnetii (strain CbuG_Q212)</name>
    <name type="common">Coxiella burnetii (strain Q212)</name>
    <dbReference type="NCBI Taxonomy" id="434923"/>
    <lineage>
        <taxon>Bacteria</taxon>
        <taxon>Pseudomonadati</taxon>
        <taxon>Pseudomonadota</taxon>
        <taxon>Gammaproteobacteria</taxon>
        <taxon>Legionellales</taxon>
        <taxon>Coxiellaceae</taxon>
        <taxon>Coxiella</taxon>
    </lineage>
</organism>
<proteinExistence type="inferred from homology"/>
<sequence>MLIFEKSRKNRRTLAHAIADKMDANDIPANLLRHDAPRLPELSELEVVRHFTRLSRQNFSIDTHFYPLGSCTMKYNPRAANRLASLPGYLKRHPLSPAPQSQAFLQCLYELQTMLTEITGMEKISLTSMAGAQGEFAGVAMIKAYHESRGDYDRTEMIVPDAAHGTNPASAAMCGFTVKEISTTKDGDIDLEKLRQMAGAKTAGIMLTNPSTLGVFERQISEVAKIIHNAGGLLYYDGANLNAILGKYRPGDMGFDVMHLNLHKTFATPHGGGGPGAGPVAAGPRLSKFLPVPMVGKNKEGYDWLTEKECPKSIGRLSAFMGNSGVLLRAYIYLRLLGKEGLSRVAEFSTLNANYLMKRLEQLGFTLAFPNRRASHEFIITLKPLTRAYGVTALDIAKRLLDYGFHAPTIYFPLLVPECLLIEPTETESKQTLDHFIEAMEKILTEIKTTPDLLRNAPHQQLINRLDEVKAARELDLRWYPIAKETEIFIQ</sequence>
<protein>
    <recommendedName>
        <fullName evidence="1">Probable glycine dehydrogenase (decarboxylating) subunit 2</fullName>
        <ecNumber evidence="1">1.4.4.2</ecNumber>
    </recommendedName>
    <alternativeName>
        <fullName evidence="1">Glycine cleavage system P-protein subunit 2</fullName>
    </alternativeName>
    <alternativeName>
        <fullName evidence="1">Glycine decarboxylase subunit 2</fullName>
    </alternativeName>
    <alternativeName>
        <fullName evidence="1">Glycine dehydrogenase (aminomethyl-transferring) subunit 2</fullName>
    </alternativeName>
</protein>